<dbReference type="EC" id="3.1.-.-" evidence="1 3"/>
<dbReference type="EMBL" id="MK005734">
    <property type="protein sequence ID" value="QBM01166.1"/>
    <property type="molecule type" value="Genomic_DNA"/>
</dbReference>
<dbReference type="PDB" id="7C7L">
    <property type="method" value="EM"/>
    <property type="resolution" value="3.00 A"/>
    <property type="chains" value="A/B=1-529"/>
</dbReference>
<dbReference type="PDBsum" id="7C7L"/>
<dbReference type="EMDB" id="EMD-30299"/>
<dbReference type="SMR" id="A0A482D308"/>
<dbReference type="GO" id="GO:0003677">
    <property type="term" value="F:DNA binding"/>
    <property type="evidence" value="ECO:0007669"/>
    <property type="project" value="UniProtKB-KW"/>
</dbReference>
<dbReference type="GO" id="GO:0004519">
    <property type="term" value="F:endonuclease activity"/>
    <property type="evidence" value="ECO:0007669"/>
    <property type="project" value="UniProtKB-KW"/>
</dbReference>
<dbReference type="GO" id="GO:0046872">
    <property type="term" value="F:metal ion binding"/>
    <property type="evidence" value="ECO:0007669"/>
    <property type="project" value="UniProtKB-KW"/>
</dbReference>
<dbReference type="GO" id="GO:0003723">
    <property type="term" value="F:RNA binding"/>
    <property type="evidence" value="ECO:0007669"/>
    <property type="project" value="UniProtKB-KW"/>
</dbReference>
<dbReference type="GO" id="GO:0051607">
    <property type="term" value="P:defense response to virus"/>
    <property type="evidence" value="ECO:0007669"/>
    <property type="project" value="UniProtKB-KW"/>
</dbReference>
<dbReference type="InterPro" id="IPR010095">
    <property type="entry name" value="Cas12f1-like_TNB"/>
</dbReference>
<dbReference type="NCBIfam" id="NF040570">
    <property type="entry name" value="guided_TnpB"/>
    <property type="match status" value="1"/>
</dbReference>
<dbReference type="NCBIfam" id="TIGR01766">
    <property type="entry name" value="IS200/IS605 family accessory protein TnpB-like domain"/>
    <property type="match status" value="1"/>
</dbReference>
<dbReference type="Pfam" id="PF07282">
    <property type="entry name" value="Cas12f1-like_TNB"/>
    <property type="match status" value="1"/>
</dbReference>
<accession>A0A482D308</accession>
<sequence length="529" mass="61517">MAKNTITKTLKLRIVRPYNSAEVEKIVADEKNNREKIALEKNKDKVKEACSKHLKVAAYCTTQVERNACLFCKARKLDDKFYQKLRGQFPDAVFWQEISEIFRQLQKQAAEIYNQSLIELYYEIFIKGKGIANASSVEHYLSDVCYTRAAELFKNAAIASGLRSKIKSNFRLKELKNMKSGLPTTKSDNFPIPLVKQKGGQYTGFEISNHNSDFIIKIPFGRWQVKKEIDKYRPWEKFDFEQVQKSPKPISLLLSTQRRKRNKGWSKDEGTEAEIKKVMNGDYQTSYIEVKRGSKIGEKSAWMLNLSIDVPKIDKGVDPSIIGGIDVGVKSPLVCAINNAFSRYSISDNDLFHFNKKMFARRRILLKKNRHKRAGHGAKNKLKPITILTEKSERFRKKLIERWACEIADFFIKNKVGTVQMENLESMKRKEDSYFNIRLRGFWPYAEMQNKIEFKLKQYGIEIRKVAPNNTSKTCSKCGHLNNYFNFEYRKKNKFPHFKCEKCNFKENADYNAALNISNPKLKSTKEEP</sequence>
<proteinExistence type="evidence at protein level"/>
<name>CS12F_UNCAX</name>
<keyword id="KW-0002">3D-structure</keyword>
<keyword id="KW-0051">Antiviral defense</keyword>
<keyword id="KW-0238">DNA-binding</keyword>
<keyword id="KW-0255">Endonuclease</keyword>
<keyword id="KW-0378">Hydrolase</keyword>
<keyword id="KW-0479">Metal-binding</keyword>
<keyword id="KW-0540">Nuclease</keyword>
<keyword id="KW-0694">RNA-binding</keyword>
<keyword id="KW-0862">Zinc</keyword>
<gene>
    <name evidence="5" type="primary">cas12f</name>
    <name evidence="4" type="synonym">cas14a1</name>
</gene>
<comment type="function">
    <text evidence="1 2 3 7">CRISPR (clustered regularly interspaced short palindromic repeat), is an adaptive immune system that provides protection against mobile genetic elements (viruses, transposable elements and conjugative plasmids). CRISPR clusters contain sequences complementary to antecedent mobile elements and target invading nucleic acids (Probable). CRISPR clusters are transcribed and processed into CRISPR RNA (crRNA), which requires a trans-encoded small RNA (tracrRNA), but not this protein (in vitro) (Probable). Upon expression in E.coli of this protein, a mini CRISPR array and the probable tracrRNA, the protein associates with both RNAs (PubMed:30337455). The mini system is not active in E.coli against phiX174 phage, nor is it active in protection against transformation by foreign plasmids (PubMed:30337455, PubMed:32246713). In vitro the purified protein-tracrRNA-crRNA complex cleaves ssDNA complementary to the crRNA; target cleavage requires both tracrRNA and crRNA, but not a protospacer adjacent motif (PAM). The tracrRNA-crRNA can be replaced by a single guide RNA (sgRNA). 2-nucleotide mismatches in the middle of the crRNA:DNA heteroduplex decrease cleavage. Cleavage occurs just downstream of the heteroduplex (PubMed:30337455). Activation of this protein results in non-specific ssDNA degradation in vitro (PubMed:30337455, PubMed:32246713). In vitro and in E.coli (coexpressed with sgRNA) has dsDNA endonuclease activity, recognizing the 5' PAM sequence TTTR; both sgRNA and a PAM are required for activity. Cleaves the target strand 24 and the nontarget strand 22 bases upstream of the PAM (respectively), resulting in 5' overhangs (PubMed:32246713, PubMed:33333018). The 2 monomers interact differently with the sgRNA and target DNA. Mutagenesis of a dimeric construct shows that one of the RuvC monomers probably cleaves both DNA strands (PubMed:33333018).</text>
</comment>
<comment type="cofactor">
    <cofactor evidence="1 2">
        <name>Mg(2+)</name>
        <dbReference type="ChEBI" id="CHEBI:18420"/>
    </cofactor>
    <text evidence="1 2">Mg(2+) is required for dsDNA cleavage (PubMed:32246713). Mg(2+) and Mn(2+) support ssDNA cleavage equally (PubMed:30337455).</text>
</comment>
<comment type="cofactor">
    <cofactor evidence="3">
        <name>Zn(2+)</name>
        <dbReference type="ChEBI" id="CHEBI:29105"/>
    </cofactor>
    <text evidence="3 11">Homodimeric Cas12f in complex with sgRNA and target DNA binds only 3 Zn(2+) ions.</text>
</comment>
<comment type="activity regulation">
    <text evidence="1 2 3">Target ssDNA cleavage is inhibited by EDTA (PubMed:30337455). Activity is maximal with 5-50 mM NaCl, is less efficient at higher NaCl concentrations (PubMed:32246713, PubMed:33333018).</text>
</comment>
<comment type="biophysicochemical properties">
    <temperatureDependence>
        <text evidence="1 2">Optimum temperature for dsDNA cleavage is 46 degrees Celsius and occurs between 37-52 degrees Celsius, no cleavage at 55 degrees Celsius (PubMed:32246713). Optimum temperature for ssDNA cleavage is 45-55 degrees Celsius (PubMed:30337455).</text>
    </temperatureDependence>
</comment>
<comment type="subunit">
    <text evidence="3">An asymmetric homodimer. Guide RNA is probably required for dimerization.</text>
</comment>
<comment type="domain">
    <text evidence="9">Has an asymmetric bilobed structure, with a recognition (REC) lobe and nuclease (NUC) lobe; the sgRNA:target DNA is bound between the 2 lobes. The REC lobe (residues 1-312) is formed by the WED, ZF and REC domains, while the NUC lobe (residues 321-529) is formed by the RuvC and TNB domains. Has a split RuvC-like domain with the nuclease active sites.</text>
</comment>
<comment type="biotechnology">
    <text evidence="1 2">The requirement for a perfect match in the middle of the heteroduplex, joined with its lack of a PAM, allows its use in detection of single-nucleotide polymorphisms (a DETECTR assay). The tracrRNA-crRNA can be replaced by a single guide RNA (sgRNA) (PubMed:30337455). Its inability to protect against plasmid transformation suggests there are elements missing in E.coli which prevents its use in more classic genome editing (PubMed:32246713).</text>
</comment>
<comment type="miscellaneous">
    <text evidence="7">Part of a type V-F CRISPR-Cas system.</text>
</comment>
<comment type="similarity">
    <text evidence="5 7">Belongs to the CRISPR-associated endonuclease Cas12f family.</text>
</comment>
<organism>
    <name type="scientific">Uncultured archaeon</name>
    <dbReference type="NCBI Taxonomy" id="115547"/>
    <lineage>
        <taxon>Archaea</taxon>
        <taxon>environmental samples</taxon>
    </lineage>
</organism>
<feature type="chain" id="PRO_0000457914" description="CRISPR-associated endodeoxyribonuclease Cas12f1">
    <location>
        <begin position="1"/>
        <end position="529"/>
    </location>
</feature>
<feature type="region of interest" description="Zinc finger domain (ZF)" evidence="3">
    <location>
        <begin position="1"/>
        <end position="95"/>
    </location>
</feature>
<feature type="region of interest" description="Recognition domain (REC)" evidence="3">
    <location>
        <begin position="96"/>
        <end position="192"/>
    </location>
</feature>
<feature type="region of interest" description="Wedge domain (WED)" evidence="3">
    <location>
        <begin position="193"/>
        <end position="312"/>
    </location>
</feature>
<feature type="region of interest" description="Linker" evidence="3">
    <location>
        <begin position="313"/>
        <end position="321"/>
    </location>
</feature>
<feature type="region of interest" description="RuvC-I" evidence="3">
    <location>
        <begin position="322"/>
        <end position="473"/>
    </location>
</feature>
<feature type="region of interest" description="Target nucleic acid-binding (TNB)" evidence="3">
    <location>
        <begin position="474"/>
        <end position="508"/>
    </location>
</feature>
<feature type="region of interest" description="RuvC-II" evidence="3">
    <location>
        <begin position="509"/>
        <end position="529"/>
    </location>
</feature>
<feature type="active site" evidence="7 8 9">
    <location>
        <position position="326"/>
    </location>
</feature>
<feature type="active site" evidence="7 9">
    <location>
        <position position="422"/>
    </location>
</feature>
<feature type="active site" evidence="7">
    <location>
        <position position="490"/>
    </location>
</feature>
<feature type="active site" evidence="7 8 9">
    <location>
        <position position="510"/>
    </location>
</feature>
<feature type="binding site" evidence="3 11">
    <location>
        <position position="50"/>
    </location>
    <ligand>
        <name>Zn(2+)</name>
        <dbReference type="ChEBI" id="CHEBI:29105"/>
        <label>1</label>
    </ligand>
</feature>
<feature type="binding site" evidence="3 11">
    <location>
        <position position="53"/>
    </location>
    <ligand>
        <name>Zn(2+)</name>
        <dbReference type="ChEBI" id="CHEBI:29105"/>
        <label>1</label>
    </ligand>
</feature>
<feature type="binding site" evidence="3 11">
    <location>
        <position position="69"/>
    </location>
    <ligand>
        <name>Zn(2+)</name>
        <dbReference type="ChEBI" id="CHEBI:29105"/>
        <label>1</label>
    </ligand>
</feature>
<feature type="binding site" evidence="3 11">
    <location>
        <position position="72"/>
    </location>
    <ligand>
        <name>Zn(2+)</name>
        <dbReference type="ChEBI" id="CHEBI:29105"/>
        <label>1</label>
    </ligand>
</feature>
<feature type="binding site" evidence="3 11">
    <location>
        <position position="475"/>
    </location>
    <ligand>
        <name>Zn(2+)</name>
        <dbReference type="ChEBI" id="CHEBI:29105"/>
        <label>2</label>
    </ligand>
</feature>
<feature type="binding site" evidence="3 11">
    <location>
        <position position="478"/>
    </location>
    <ligand>
        <name>Zn(2+)</name>
        <dbReference type="ChEBI" id="CHEBI:29105"/>
        <label>2</label>
    </ligand>
</feature>
<feature type="binding site" evidence="3 11">
    <location>
        <position position="500"/>
    </location>
    <ligand>
        <name>Zn(2+)</name>
        <dbReference type="ChEBI" id="CHEBI:29105"/>
        <label>2</label>
    </ligand>
</feature>
<feature type="binding site" evidence="3 11">
    <location>
        <position position="503"/>
    </location>
    <ligand>
        <name>Zn(2+)</name>
        <dbReference type="ChEBI" id="CHEBI:29105"/>
        <label>2</label>
    </ligand>
</feature>
<feature type="mutagenesis site" description="About 15% cleavage of target dsDNA." evidence="3">
    <location>
        <begin position="39"/>
        <end position="72"/>
    </location>
</feature>
<feature type="mutagenesis site" description="Loss of cleavage of target dsDNA cleavage, binds sgRNA; when associated with R-178." evidence="3">
    <original>IELYYEIFI</original>
    <variation>RELYAEIFR</variation>
    <location>
        <begin position="118"/>
        <end position="126"/>
    </location>
</feature>
<feature type="mutagenesis site" description="Almost complete loss of target dsDNA cleavage." evidence="3">
    <original>I</original>
    <variation>R</variation>
    <location>
        <position position="118"/>
    </location>
</feature>
<feature type="mutagenesis site" description="About 80% cleavage of target dsDNA." evidence="3">
    <original>Y</original>
    <variation>A</variation>
    <location>
        <position position="122"/>
    </location>
</feature>
<feature type="mutagenesis site" description="About 60% cleavage of target dsDNA." evidence="3">
    <original>I</original>
    <variation>R</variation>
    <location>
        <position position="126"/>
    </location>
</feature>
<feature type="mutagenesis site" description="No cleavage of target dsDNA cleavage." evidence="3">
    <original>Y</original>
    <variation>A</variation>
    <location>
        <position position="146"/>
    </location>
</feature>
<feature type="mutagenesis site" description="About 40% cleavage of target dsDNA, loss of cleavage, binds sgRNA; when associated with 118-R--R-126." evidence="3">
    <original>M</original>
    <variation>R</variation>
    <location>
        <position position="178"/>
    </location>
</feature>
<feature type="mutagenesis site" description="About 30% cleavage of target dsDNA." evidence="3">
    <original>Q</original>
    <variation>A</variation>
    <location>
        <position position="197"/>
    </location>
</feature>
<feature type="mutagenesis site" description="About 8% cleavage of target dsDNA." evidence="3">
    <original>K</original>
    <variation>A</variation>
    <location>
        <position position="198"/>
    </location>
</feature>
<feature type="mutagenesis site" description="Nearly wild-type cleavage of target dsDNA." evidence="3">
    <original>S</original>
    <variation>A</variation>
    <location>
        <position position="286"/>
    </location>
</feature>
<feature type="mutagenesis site" description="No cleavage of target ssDNA. No cleavage of supercoiled target dsDNA." evidence="1 2 3">
    <original>D</original>
    <variation>A</variation>
    <location>
        <position position="326"/>
    </location>
</feature>
<feature type="mutagenesis site" description="No cleavage of target dsDNA cleavage." evidence="3">
    <location>
        <begin position="366"/>
        <end position="383"/>
    </location>
</feature>
<feature type="mutagenesis site" description="No cleavage of target ssDNA." evidence="1">
    <original>E</original>
    <variation>A</variation>
    <location>
        <position position="422"/>
    </location>
</feature>
<feature type="mutagenesis site" description="About 60% cleavage of target dsDNA." evidence="3">
    <original>F</original>
    <variation>A</variation>
    <location>
        <position position="487"/>
    </location>
</feature>
<feature type="mutagenesis site" description="No cleavage of target ssDNA." evidence="1">
    <original>R</original>
    <variation>A</variation>
    <location>
        <position position="490"/>
    </location>
</feature>
<feature type="mutagenesis site" description="No cleavage of target ssDNA. No cleavage of supercoiled target dsDNA." evidence="1 2">
    <original>D</original>
    <variation>A</variation>
    <location>
        <position position="510"/>
    </location>
</feature>
<feature type="strand" evidence="13">
    <location>
        <begin position="5"/>
        <end position="18"/>
    </location>
</feature>
<feature type="helix" evidence="13">
    <location>
        <begin position="21"/>
        <end position="38"/>
    </location>
</feature>
<feature type="helix" evidence="13">
    <location>
        <begin position="51"/>
        <end position="53"/>
    </location>
</feature>
<feature type="helix" evidence="13">
    <location>
        <begin position="66"/>
        <end position="68"/>
    </location>
</feature>
<feature type="helix" evidence="13">
    <location>
        <begin position="70"/>
        <end position="73"/>
    </location>
</feature>
<feature type="helix" evidence="13">
    <location>
        <begin position="79"/>
        <end position="88"/>
    </location>
</feature>
<feature type="strand" evidence="13">
    <location>
        <begin position="89"/>
        <end position="91"/>
    </location>
</feature>
<feature type="helix" evidence="13">
    <location>
        <begin position="95"/>
        <end position="124"/>
    </location>
</feature>
<feature type="turn" evidence="13">
    <location>
        <begin position="125"/>
        <end position="128"/>
    </location>
</feature>
<feature type="helix" evidence="13">
    <location>
        <begin position="136"/>
        <end position="153"/>
    </location>
</feature>
<feature type="helix" evidence="13">
    <location>
        <begin position="156"/>
        <end position="167"/>
    </location>
</feature>
<feature type="helix" evidence="13">
    <location>
        <begin position="172"/>
        <end position="176"/>
    </location>
</feature>
<feature type="strand" evidence="13">
    <location>
        <begin position="192"/>
        <end position="195"/>
    </location>
</feature>
<feature type="strand" evidence="13">
    <location>
        <begin position="198"/>
        <end position="201"/>
    </location>
</feature>
<feature type="strand" evidence="13">
    <location>
        <begin position="205"/>
        <end position="208"/>
    </location>
</feature>
<feature type="strand" evidence="13">
    <location>
        <begin position="210"/>
        <end position="212"/>
    </location>
</feature>
<feature type="strand" evidence="13">
    <location>
        <begin position="214"/>
        <end position="218"/>
    </location>
</feature>
<feature type="strand" evidence="13">
    <location>
        <begin position="223"/>
        <end position="225"/>
    </location>
</feature>
<feature type="strand" evidence="13">
    <location>
        <begin position="238"/>
        <end position="240"/>
    </location>
</feature>
<feature type="turn" evidence="13">
    <location>
        <begin position="243"/>
        <end position="245"/>
    </location>
</feature>
<feature type="strand" evidence="13">
    <location>
        <begin position="250"/>
        <end position="254"/>
    </location>
</feature>
<feature type="helix" evidence="13">
    <location>
        <begin position="259"/>
        <end position="261"/>
    </location>
</feature>
<feature type="strand" evidence="13">
    <location>
        <begin position="262"/>
        <end position="264"/>
    </location>
</feature>
<feature type="strand" evidence="13">
    <location>
        <begin position="268"/>
        <end position="270"/>
    </location>
</feature>
<feature type="helix" evidence="13">
    <location>
        <begin position="271"/>
        <end position="280"/>
    </location>
</feature>
<feature type="strand" evidence="13">
    <location>
        <begin position="287"/>
        <end position="311"/>
    </location>
</feature>
<feature type="strand" evidence="13">
    <location>
        <begin position="318"/>
        <end position="326"/>
    </location>
</feature>
<feature type="strand" evidence="13">
    <location>
        <begin position="329"/>
        <end position="332"/>
    </location>
</feature>
<feature type="strand" evidence="13">
    <location>
        <begin position="334"/>
        <end position="337"/>
    </location>
</feature>
<feature type="turn" evidence="13">
    <location>
        <begin position="338"/>
        <end position="340"/>
    </location>
</feature>
<feature type="helix" evidence="13">
    <location>
        <begin position="350"/>
        <end position="360"/>
    </location>
</feature>
<feature type="helix" evidence="13">
    <location>
        <begin position="364"/>
        <end position="368"/>
    </location>
</feature>
<feature type="strand" evidence="13">
    <location>
        <begin position="370"/>
        <end position="373"/>
    </location>
</feature>
<feature type="helix" evidence="13">
    <location>
        <begin position="378"/>
        <end position="414"/>
    </location>
</feature>
<feature type="strand" evidence="13">
    <location>
        <begin position="416"/>
        <end position="422"/>
    </location>
</feature>
<feature type="helix" evidence="13">
    <location>
        <begin position="424"/>
        <end position="428"/>
    </location>
</feature>
<feature type="strand" evidence="13">
    <location>
        <begin position="431"/>
        <end position="433"/>
    </location>
</feature>
<feature type="helix" evidence="13">
    <location>
        <begin position="434"/>
        <end position="437"/>
    </location>
</feature>
<feature type="helix" evidence="13">
    <location>
        <begin position="445"/>
        <end position="459"/>
    </location>
</feature>
<feature type="turn" evidence="13">
    <location>
        <begin position="471"/>
        <end position="473"/>
    </location>
</feature>
<feature type="turn" evidence="13">
    <location>
        <begin position="476"/>
        <end position="478"/>
    </location>
</feature>
<feature type="strand" evidence="13">
    <location>
        <begin position="483"/>
        <end position="485"/>
    </location>
</feature>
<feature type="helix" evidence="13">
    <location>
        <begin position="487"/>
        <end position="493"/>
    </location>
</feature>
<feature type="helix" evidence="13">
    <location>
        <begin position="509"/>
        <end position="515"/>
    </location>
</feature>
<protein>
    <recommendedName>
        <fullName evidence="5">CRISPR-associated endodeoxyribonuclease Cas12f1</fullName>
        <shortName evidence="6">Un1Cas12f1</shortName>
        <ecNumber evidence="1 3">3.1.-.-</ecNumber>
    </recommendedName>
    <alternativeName>
        <fullName evidence="4">CRISPR-associated endodeoxyribonuclease Cas14a1</fullName>
    </alternativeName>
</protein>
<reference evidence="10" key="1">
    <citation type="journal article" date="2018" name="Science">
        <title>Programmed DNA destruction by miniature CRISPR-Cas14 enzymes.</title>
        <authorList>
            <person name="Harrington L.B."/>
            <person name="Burstein D."/>
            <person name="Chen J.S."/>
            <person name="Paez-Espino D."/>
            <person name="Ma E."/>
            <person name="Witte I.P."/>
            <person name="Cofsky J.C."/>
            <person name="Kyrpides N.C."/>
            <person name="Banfield J.F."/>
            <person name="Doudna J.A."/>
        </authorList>
    </citation>
    <scope>NUCLEOTIDE SEQUENCE [GENOMIC DNA]</scope>
    <scope>FUNCTION</scope>
    <scope>CATALYTIC ACTIVITY</scope>
    <scope>PROBABLE ACTIVE SITES</scope>
    <scope>COFACTOR</scope>
    <scope>ACTIVITY REGULATION</scope>
    <scope>BIOPHYSICOCHEMICAL PROPERTIES</scope>
    <scope>BIOTECHNOLOGY</scope>
    <scope>DNA-BINDING</scope>
    <scope>RNA-BINDING</scope>
    <scope>MUTAGENESIS OF ASP-326; GLU-422; ARG-490 AND ASP-510</scope>
</reference>
<reference key="2">
    <citation type="journal article" date="2020" name="Nat. Rev. Microbiol.">
        <title>Evolutionary classification of CRISPR-Cas systems: a burst of class 2 and derived variants.</title>
        <authorList>
            <person name="Makarova K.S."/>
            <person name="Wolf Y.I."/>
            <person name="Iranzo J."/>
            <person name="Shmakov S.A."/>
            <person name="Alkhnbashi O.S."/>
            <person name="Brouns S.J.J."/>
            <person name="Charpentier E."/>
            <person name="Cheng D."/>
            <person name="Haft D.H."/>
            <person name="Horvath P."/>
            <person name="Moineau S."/>
            <person name="Mojica F.J.M."/>
            <person name="Scott D."/>
            <person name="Shah S.A."/>
            <person name="Siksnys V."/>
            <person name="Terns M.P."/>
            <person name="Venclovas C."/>
            <person name="White M.F."/>
            <person name="Yakunin A.F."/>
            <person name="Yan W."/>
            <person name="Zhang F."/>
            <person name="Garrett R.A."/>
            <person name="Backofen R."/>
            <person name="van der Oost J."/>
            <person name="Barrangou R."/>
            <person name="Koonin E.V."/>
        </authorList>
    </citation>
    <scope>NOMENCLATURE</scope>
</reference>
<reference key="3">
    <citation type="journal article" date="2020" name="Nucleic Acids Res.">
        <title>PAM recognition by miniature CRISPR-Cas12f nucleases triggers programmable double-stranded DNA target cleavage.</title>
        <authorList>
            <person name="Karvelis T."/>
            <person name="Bigelyte G."/>
            <person name="Young J.K."/>
            <person name="Hou Z."/>
            <person name="Zedaveinyte R."/>
            <person name="Budre K."/>
            <person name="Paulraj S."/>
            <person name="Djukanovic V."/>
            <person name="Gasior S."/>
            <person name="Silanskas A."/>
            <person name="Venclovas C."/>
            <person name="Siksnys V."/>
        </authorList>
    </citation>
    <scope>FUNCTION</scope>
    <scope>CATALYTIC ACTIVITY</scope>
    <scope>PROBABLE ACTIVE SITES</scope>
    <scope>COFACTOR</scope>
    <scope>ACTIVITY REGULATION</scope>
    <scope>BIOPHYSICOCHEMICAL PROPERTIES</scope>
    <scope>RNA-BINDING</scope>
    <scope>MUTAGENESIS OF ASP-326 AND ASP-510</scope>
</reference>
<reference evidence="12" key="4">
    <citation type="journal article" date="2021" name="Mol. Cell">
        <title>Structure of the miniature type V-F CRISPR-Cas effector enzyme.</title>
        <authorList>
            <person name="Takeda S.N."/>
            <person name="Nakagawa R."/>
            <person name="Okazaki S."/>
            <person name="Hirano H."/>
            <person name="Kobayashi K."/>
            <person name="Kusakizako T."/>
            <person name="Nishizawa T."/>
            <person name="Yamashita K."/>
            <person name="Nishimasu H."/>
            <person name="Nureki O."/>
        </authorList>
    </citation>
    <scope>STRUCTURE BY ELECTRON MICROSCOPY (3.00 ANGSTROMS) IN COMPLEX WITH GUIDE RNA; TARGET DNA AND ZINC</scope>
    <scope>FUNCTION</scope>
    <scope>REACTION MECHANISM</scope>
    <scope>CATALYTIC ACTIVITY</scope>
    <scope>COFACTOR</scope>
    <scope>ACTIVITY REGULATION</scope>
    <scope>SUBUNIT</scope>
    <scope>DOMAIN</scope>
    <scope>MUTAGENESIS OF 39-LEU--CYS-72; 118-ILE--ILE-126; ILE-118; TYR-122; ILE-126; TYR-146; MET-178; GLN-197; LYS-198; SER-286; ASP-326; 366-LEU--LYS-383 AND PHE-487</scope>
</reference>
<evidence type="ECO:0000269" key="1">
    <source>
    </source>
</evidence>
<evidence type="ECO:0000269" key="2">
    <source>
    </source>
</evidence>
<evidence type="ECO:0000269" key="3">
    <source>
    </source>
</evidence>
<evidence type="ECO:0000303" key="4">
    <source>
    </source>
</evidence>
<evidence type="ECO:0000303" key="5">
    <source>
    </source>
</evidence>
<evidence type="ECO:0000303" key="6">
    <source>
    </source>
</evidence>
<evidence type="ECO:0000305" key="7">
    <source>
    </source>
</evidence>
<evidence type="ECO:0000305" key="8">
    <source>
    </source>
</evidence>
<evidence type="ECO:0000305" key="9">
    <source>
    </source>
</evidence>
<evidence type="ECO:0000312" key="10">
    <source>
        <dbReference type="EMBL" id="QBM01166.1"/>
    </source>
</evidence>
<evidence type="ECO:0000312" key="11">
    <source>
        <dbReference type="PDB" id="7C7L"/>
    </source>
</evidence>
<evidence type="ECO:0007744" key="12">
    <source>
        <dbReference type="PDB" id="7C7L"/>
    </source>
</evidence>
<evidence type="ECO:0007829" key="13">
    <source>
        <dbReference type="PDB" id="7C7L"/>
    </source>
</evidence>